<protein>
    <recommendedName>
        <fullName>Venom protein 54.1</fullName>
    </recommendedName>
</protein>
<reference key="1">
    <citation type="journal article" date="2010" name="BMC Genomics">
        <title>Comparative venom gland transcriptome analysis of the scorpion Lychas mucronatus reveals intraspecific toxic gene diversity and new venomous components.</title>
        <authorList>
            <person name="Zhao R."/>
            <person name="Ma Y."/>
            <person name="He Y."/>
            <person name="Di Z."/>
            <person name="Wu Y.-L."/>
            <person name="Cao Z.-J."/>
            <person name="Li W.-X."/>
        </authorList>
    </citation>
    <scope>NUCLEOTIDE SEQUENCE [MRNA]</scope>
    <source>
        <strain>Yunnan</strain>
        <tissue>Venom gland</tissue>
    </source>
</reference>
<proteinExistence type="inferred from homology"/>
<sequence length="116" mass="13673">MNFQVFSLIFFNFVYYCSCSTFEEALCELEKEERVKVLRCYEENTDPGILLYSKSFLSCLLDERASFITLNEMACGKTFSTNERRACFEEANVFLVNFTEEMKKKHKNAVKKCFDK</sequence>
<name>VP54_LYCMC</name>
<organism>
    <name type="scientific">Lychas mucronatus</name>
    <name type="common">Chinese swimming scorpion</name>
    <dbReference type="NCBI Taxonomy" id="172552"/>
    <lineage>
        <taxon>Eukaryota</taxon>
        <taxon>Metazoa</taxon>
        <taxon>Ecdysozoa</taxon>
        <taxon>Arthropoda</taxon>
        <taxon>Chelicerata</taxon>
        <taxon>Arachnida</taxon>
        <taxon>Scorpiones</taxon>
        <taxon>Buthida</taxon>
        <taxon>Buthoidea</taxon>
        <taxon>Buthidae</taxon>
        <taxon>Lychas</taxon>
    </lineage>
</organism>
<evidence type="ECO:0000250" key="1"/>
<evidence type="ECO:0000255" key="2"/>
<evidence type="ECO:0000305" key="3"/>
<feature type="signal peptide" evidence="2">
    <location>
        <begin position="1"/>
        <end position="19"/>
    </location>
</feature>
<feature type="chain" id="PRO_0000403899" description="Venom protein 54.1">
    <location>
        <begin position="20"/>
        <end position="116"/>
    </location>
</feature>
<comment type="subcellular location">
    <subcellularLocation>
        <location evidence="1">Secreted</location>
    </subcellularLocation>
</comment>
<comment type="tissue specificity">
    <text evidence="3">Expressed by the venom gland.</text>
</comment>
<comment type="PTM">
    <text evidence="1">Contains 3 disulfide bonds.</text>
</comment>
<keyword id="KW-1015">Disulfide bond</keyword>
<keyword id="KW-0964">Secreted</keyword>
<keyword id="KW-0732">Signal</keyword>
<dbReference type="EMBL" id="GT028912">
    <property type="status" value="NOT_ANNOTATED_CDS"/>
    <property type="molecule type" value="mRNA"/>
</dbReference>
<dbReference type="GO" id="GO:0005576">
    <property type="term" value="C:extracellular region"/>
    <property type="evidence" value="ECO:0007669"/>
    <property type="project" value="UniProtKB-SubCell"/>
</dbReference>
<accession>P0CJ07</accession>